<accession>B0T338</accession>
<feature type="chain" id="PRO_1000086869" description="ATP synthase subunit alpha">
    <location>
        <begin position="1"/>
        <end position="510"/>
    </location>
</feature>
<feature type="binding site" evidence="1">
    <location>
        <begin position="170"/>
        <end position="177"/>
    </location>
    <ligand>
        <name>ATP</name>
        <dbReference type="ChEBI" id="CHEBI:30616"/>
    </ligand>
</feature>
<feature type="site" description="Required for activity" evidence="1">
    <location>
        <position position="371"/>
    </location>
</feature>
<dbReference type="EC" id="7.1.2.2" evidence="1"/>
<dbReference type="EMBL" id="CP000927">
    <property type="protein sequence ID" value="ABZ73860.1"/>
    <property type="molecule type" value="Genomic_DNA"/>
</dbReference>
<dbReference type="SMR" id="B0T338"/>
<dbReference type="STRING" id="366602.Caul_4740"/>
<dbReference type="KEGG" id="cak:Caul_4740"/>
<dbReference type="eggNOG" id="COG0056">
    <property type="taxonomic scope" value="Bacteria"/>
</dbReference>
<dbReference type="HOGENOM" id="CLU_010091_2_1_5"/>
<dbReference type="OrthoDB" id="9803053at2"/>
<dbReference type="GO" id="GO:0005886">
    <property type="term" value="C:plasma membrane"/>
    <property type="evidence" value="ECO:0007669"/>
    <property type="project" value="UniProtKB-SubCell"/>
</dbReference>
<dbReference type="GO" id="GO:0045259">
    <property type="term" value="C:proton-transporting ATP synthase complex"/>
    <property type="evidence" value="ECO:0007669"/>
    <property type="project" value="UniProtKB-KW"/>
</dbReference>
<dbReference type="GO" id="GO:0043531">
    <property type="term" value="F:ADP binding"/>
    <property type="evidence" value="ECO:0007669"/>
    <property type="project" value="TreeGrafter"/>
</dbReference>
<dbReference type="GO" id="GO:0005524">
    <property type="term" value="F:ATP binding"/>
    <property type="evidence" value="ECO:0007669"/>
    <property type="project" value="UniProtKB-UniRule"/>
</dbReference>
<dbReference type="GO" id="GO:0046933">
    <property type="term" value="F:proton-transporting ATP synthase activity, rotational mechanism"/>
    <property type="evidence" value="ECO:0007669"/>
    <property type="project" value="UniProtKB-UniRule"/>
</dbReference>
<dbReference type="CDD" id="cd18113">
    <property type="entry name" value="ATP-synt_F1_alpha_C"/>
    <property type="match status" value="1"/>
</dbReference>
<dbReference type="CDD" id="cd18116">
    <property type="entry name" value="ATP-synt_F1_alpha_N"/>
    <property type="match status" value="1"/>
</dbReference>
<dbReference type="CDD" id="cd01132">
    <property type="entry name" value="F1-ATPase_alpha_CD"/>
    <property type="match status" value="1"/>
</dbReference>
<dbReference type="FunFam" id="1.20.150.20:FF:000001">
    <property type="entry name" value="ATP synthase subunit alpha"/>
    <property type="match status" value="1"/>
</dbReference>
<dbReference type="FunFam" id="2.40.30.20:FF:000001">
    <property type="entry name" value="ATP synthase subunit alpha"/>
    <property type="match status" value="1"/>
</dbReference>
<dbReference type="FunFam" id="3.40.50.300:FF:004039">
    <property type="entry name" value="ATP synthase subunit alpha, mitochondrial"/>
    <property type="match status" value="1"/>
</dbReference>
<dbReference type="Gene3D" id="2.40.30.20">
    <property type="match status" value="1"/>
</dbReference>
<dbReference type="Gene3D" id="1.20.150.20">
    <property type="entry name" value="ATP synthase alpha/beta chain, C-terminal domain"/>
    <property type="match status" value="1"/>
</dbReference>
<dbReference type="Gene3D" id="3.40.50.300">
    <property type="entry name" value="P-loop containing nucleotide triphosphate hydrolases"/>
    <property type="match status" value="1"/>
</dbReference>
<dbReference type="HAMAP" id="MF_01346">
    <property type="entry name" value="ATP_synth_alpha_bact"/>
    <property type="match status" value="1"/>
</dbReference>
<dbReference type="InterPro" id="IPR023366">
    <property type="entry name" value="ATP_synth_asu-like_sf"/>
</dbReference>
<dbReference type="InterPro" id="IPR000793">
    <property type="entry name" value="ATP_synth_asu_C"/>
</dbReference>
<dbReference type="InterPro" id="IPR038376">
    <property type="entry name" value="ATP_synth_asu_C_sf"/>
</dbReference>
<dbReference type="InterPro" id="IPR033732">
    <property type="entry name" value="ATP_synth_F1_a_nt-bd_dom"/>
</dbReference>
<dbReference type="InterPro" id="IPR005294">
    <property type="entry name" value="ATP_synth_F1_asu"/>
</dbReference>
<dbReference type="InterPro" id="IPR020003">
    <property type="entry name" value="ATPase_a/bsu_AS"/>
</dbReference>
<dbReference type="InterPro" id="IPR004100">
    <property type="entry name" value="ATPase_F1/V1/A1_a/bsu_N"/>
</dbReference>
<dbReference type="InterPro" id="IPR036121">
    <property type="entry name" value="ATPase_F1/V1/A1_a/bsu_N_sf"/>
</dbReference>
<dbReference type="InterPro" id="IPR000194">
    <property type="entry name" value="ATPase_F1/V1/A1_a/bsu_nucl-bd"/>
</dbReference>
<dbReference type="InterPro" id="IPR027417">
    <property type="entry name" value="P-loop_NTPase"/>
</dbReference>
<dbReference type="NCBIfam" id="TIGR00962">
    <property type="entry name" value="atpA"/>
    <property type="match status" value="1"/>
</dbReference>
<dbReference type="NCBIfam" id="NF009884">
    <property type="entry name" value="PRK13343.1"/>
    <property type="match status" value="1"/>
</dbReference>
<dbReference type="PANTHER" id="PTHR48082">
    <property type="entry name" value="ATP SYNTHASE SUBUNIT ALPHA, MITOCHONDRIAL"/>
    <property type="match status" value="1"/>
</dbReference>
<dbReference type="PANTHER" id="PTHR48082:SF2">
    <property type="entry name" value="ATP SYNTHASE SUBUNIT ALPHA, MITOCHONDRIAL"/>
    <property type="match status" value="1"/>
</dbReference>
<dbReference type="Pfam" id="PF00006">
    <property type="entry name" value="ATP-synt_ab"/>
    <property type="match status" value="1"/>
</dbReference>
<dbReference type="Pfam" id="PF00306">
    <property type="entry name" value="ATP-synt_ab_C"/>
    <property type="match status" value="1"/>
</dbReference>
<dbReference type="Pfam" id="PF02874">
    <property type="entry name" value="ATP-synt_ab_N"/>
    <property type="match status" value="1"/>
</dbReference>
<dbReference type="PIRSF" id="PIRSF039088">
    <property type="entry name" value="F_ATPase_subunit_alpha"/>
    <property type="match status" value="1"/>
</dbReference>
<dbReference type="SUPFAM" id="SSF47917">
    <property type="entry name" value="C-terminal domain of alpha and beta subunits of F1 ATP synthase"/>
    <property type="match status" value="1"/>
</dbReference>
<dbReference type="SUPFAM" id="SSF50615">
    <property type="entry name" value="N-terminal domain of alpha and beta subunits of F1 ATP synthase"/>
    <property type="match status" value="1"/>
</dbReference>
<dbReference type="SUPFAM" id="SSF52540">
    <property type="entry name" value="P-loop containing nucleoside triphosphate hydrolases"/>
    <property type="match status" value="1"/>
</dbReference>
<dbReference type="PROSITE" id="PS00152">
    <property type="entry name" value="ATPASE_ALPHA_BETA"/>
    <property type="match status" value="1"/>
</dbReference>
<reference key="1">
    <citation type="submission" date="2008-01" db="EMBL/GenBank/DDBJ databases">
        <title>Complete sequence of chromosome of Caulobacter sp. K31.</title>
        <authorList>
            <consortium name="US DOE Joint Genome Institute"/>
            <person name="Copeland A."/>
            <person name="Lucas S."/>
            <person name="Lapidus A."/>
            <person name="Barry K."/>
            <person name="Glavina del Rio T."/>
            <person name="Dalin E."/>
            <person name="Tice H."/>
            <person name="Pitluck S."/>
            <person name="Bruce D."/>
            <person name="Goodwin L."/>
            <person name="Thompson L.S."/>
            <person name="Brettin T."/>
            <person name="Detter J.C."/>
            <person name="Han C."/>
            <person name="Schmutz J."/>
            <person name="Larimer F."/>
            <person name="Land M."/>
            <person name="Hauser L."/>
            <person name="Kyrpides N."/>
            <person name="Kim E."/>
            <person name="Stephens C."/>
            <person name="Richardson P."/>
        </authorList>
    </citation>
    <scope>NUCLEOTIDE SEQUENCE [LARGE SCALE GENOMIC DNA]</scope>
    <source>
        <strain>K31</strain>
    </source>
</reference>
<evidence type="ECO:0000255" key="1">
    <source>
        <dbReference type="HAMAP-Rule" id="MF_01346"/>
    </source>
</evidence>
<protein>
    <recommendedName>
        <fullName evidence="1">ATP synthase subunit alpha</fullName>
        <ecNumber evidence="1">7.1.2.2</ecNumber>
    </recommendedName>
    <alternativeName>
        <fullName evidence="1">ATP synthase F1 sector subunit alpha</fullName>
    </alternativeName>
    <alternativeName>
        <fullName evidence="1">F-ATPase subunit alpha</fullName>
    </alternativeName>
</protein>
<proteinExistence type="inferred from homology"/>
<comment type="function">
    <text evidence="1">Produces ATP from ADP in the presence of a proton gradient across the membrane. The alpha chain is a regulatory subunit.</text>
</comment>
<comment type="catalytic activity">
    <reaction evidence="1">
        <text>ATP + H2O + 4 H(+)(in) = ADP + phosphate + 5 H(+)(out)</text>
        <dbReference type="Rhea" id="RHEA:57720"/>
        <dbReference type="ChEBI" id="CHEBI:15377"/>
        <dbReference type="ChEBI" id="CHEBI:15378"/>
        <dbReference type="ChEBI" id="CHEBI:30616"/>
        <dbReference type="ChEBI" id="CHEBI:43474"/>
        <dbReference type="ChEBI" id="CHEBI:456216"/>
        <dbReference type="EC" id="7.1.2.2"/>
    </reaction>
</comment>
<comment type="subunit">
    <text evidence="1">F-type ATPases have 2 components, CF(1) - the catalytic core - and CF(0) - the membrane proton channel. CF(1) has five subunits: alpha(3), beta(3), gamma(1), delta(1), epsilon(1). CF(0) has three main subunits: a(1), b(2) and c(9-12). The alpha and beta chains form an alternating ring which encloses part of the gamma chain. CF(1) is attached to CF(0) by a central stalk formed by the gamma and epsilon chains, while a peripheral stalk is formed by the delta and b chains.</text>
</comment>
<comment type="subcellular location">
    <subcellularLocation>
        <location evidence="1">Cell inner membrane</location>
        <topology evidence="1">Peripheral membrane protein</topology>
    </subcellularLocation>
</comment>
<comment type="similarity">
    <text evidence="1">Belongs to the ATPase alpha/beta chains family.</text>
</comment>
<sequence length="510" mass="55223">MDIRAAEISAILKSQIANFGEEAAVSDVGQVLSVGDGIARIYGLDNVQAGEMVEFPKAGVKGMALNLERDNVGAVIFGQDQAIKEGDEVRRLGEIVDVPVGRGLLGRVVNPLGEPIDGKGPIVSTERRRVDVKAPGIIPRKSVHEPVQTGLKSIDTLIPVGRGQRELIIGDRQTGKTAVAIDTILNQKAANAGTDESAKLYCVYVAIGQKRSTVAQIVKTLEEHGALEYTIVVVASASEPAPLQYLAPFSGCAMGEWFRDNGLHGLIIYDDLSKQAVAYRQMSLLLRRPPGREAYPGDVFYLHSRLLERAAKLNEDNGSGSLTALPIIETQANDVSAYIPTNVISITDGQIFLETDLFYQGIRPAVNVGISVSRVGSSAQIKAMKQVAGAIKGELAQYREMAAFAKFGSDLDASTQKLLARGERLTELLKQPQYAPQAVEEQVCVIYAGTRGYLDNIPTSSVRRFESELLARLHSQHKDLLDNIRTKKALDKDLENTLKSVLDNFSATFA</sequence>
<name>ATPA_CAUSK</name>
<organism>
    <name type="scientific">Caulobacter sp. (strain K31)</name>
    <dbReference type="NCBI Taxonomy" id="366602"/>
    <lineage>
        <taxon>Bacteria</taxon>
        <taxon>Pseudomonadati</taxon>
        <taxon>Pseudomonadota</taxon>
        <taxon>Alphaproteobacteria</taxon>
        <taxon>Caulobacterales</taxon>
        <taxon>Caulobacteraceae</taxon>
        <taxon>Caulobacter</taxon>
    </lineage>
</organism>
<gene>
    <name evidence="1" type="primary">atpA</name>
    <name type="ordered locus">Caul_4740</name>
</gene>
<keyword id="KW-0066">ATP synthesis</keyword>
<keyword id="KW-0067">ATP-binding</keyword>
<keyword id="KW-0997">Cell inner membrane</keyword>
<keyword id="KW-1003">Cell membrane</keyword>
<keyword id="KW-0139">CF(1)</keyword>
<keyword id="KW-0375">Hydrogen ion transport</keyword>
<keyword id="KW-0406">Ion transport</keyword>
<keyword id="KW-0472">Membrane</keyword>
<keyword id="KW-0547">Nucleotide-binding</keyword>
<keyword id="KW-1278">Translocase</keyword>
<keyword id="KW-0813">Transport</keyword>